<comment type="function">
    <text evidence="1">Catalyzes a mechanistically unusual reaction, the ATP-dependent insertion of CO2 between the N7 and N8 nitrogen atoms of 7,8-diaminopelargonic acid (DAPA, also called 7,8-diammoniononanoate) to form a ureido ring.</text>
</comment>
<comment type="catalytic activity">
    <reaction evidence="1">
        <text>(7R,8S)-7,8-diammoniononanoate + CO2 + ATP = (4R,5S)-dethiobiotin + ADP + phosphate + 3 H(+)</text>
        <dbReference type="Rhea" id="RHEA:15805"/>
        <dbReference type="ChEBI" id="CHEBI:15378"/>
        <dbReference type="ChEBI" id="CHEBI:16526"/>
        <dbReference type="ChEBI" id="CHEBI:30616"/>
        <dbReference type="ChEBI" id="CHEBI:43474"/>
        <dbReference type="ChEBI" id="CHEBI:149469"/>
        <dbReference type="ChEBI" id="CHEBI:149473"/>
        <dbReference type="ChEBI" id="CHEBI:456216"/>
        <dbReference type="EC" id="6.3.3.3"/>
    </reaction>
</comment>
<comment type="cofactor">
    <cofactor evidence="1">
        <name>Mg(2+)</name>
        <dbReference type="ChEBI" id="CHEBI:18420"/>
    </cofactor>
</comment>
<comment type="pathway">
    <text evidence="1">Cofactor biosynthesis; biotin biosynthesis; biotin from 7,8-diaminononanoate: step 1/2.</text>
</comment>
<comment type="subunit">
    <text evidence="1">Homodimer.</text>
</comment>
<comment type="subcellular location">
    <subcellularLocation>
        <location evidence="1">Cytoplasm</location>
    </subcellularLocation>
</comment>
<comment type="similarity">
    <text evidence="1">Belongs to the dethiobiotin synthetase family.</text>
</comment>
<organism>
    <name type="scientific">Rhodopseudomonas palustris (strain BisB18)</name>
    <dbReference type="NCBI Taxonomy" id="316056"/>
    <lineage>
        <taxon>Bacteria</taxon>
        <taxon>Pseudomonadati</taxon>
        <taxon>Pseudomonadota</taxon>
        <taxon>Alphaproteobacteria</taxon>
        <taxon>Hyphomicrobiales</taxon>
        <taxon>Nitrobacteraceae</taxon>
        <taxon>Rhodopseudomonas</taxon>
    </lineage>
</organism>
<accession>Q216N4</accession>
<evidence type="ECO:0000255" key="1">
    <source>
        <dbReference type="HAMAP-Rule" id="MF_00336"/>
    </source>
</evidence>
<gene>
    <name evidence="1" type="primary">bioD</name>
    <name type="ordered locus">RPC_2098</name>
</gene>
<keyword id="KW-0067">ATP-binding</keyword>
<keyword id="KW-0093">Biotin biosynthesis</keyword>
<keyword id="KW-0963">Cytoplasm</keyword>
<keyword id="KW-0436">Ligase</keyword>
<keyword id="KW-0460">Magnesium</keyword>
<keyword id="KW-0479">Metal-binding</keyword>
<keyword id="KW-0547">Nucleotide-binding</keyword>
<dbReference type="EC" id="6.3.3.3" evidence="1"/>
<dbReference type="EMBL" id="CP000301">
    <property type="protein sequence ID" value="ABD87652.1"/>
    <property type="molecule type" value="Genomic_DNA"/>
</dbReference>
<dbReference type="SMR" id="Q216N4"/>
<dbReference type="STRING" id="316056.RPC_2098"/>
<dbReference type="KEGG" id="rpc:RPC_2098"/>
<dbReference type="eggNOG" id="COG0132">
    <property type="taxonomic scope" value="Bacteria"/>
</dbReference>
<dbReference type="HOGENOM" id="CLU_072551_2_0_5"/>
<dbReference type="OrthoDB" id="9802097at2"/>
<dbReference type="UniPathway" id="UPA00078">
    <property type="reaction ID" value="UER00161"/>
</dbReference>
<dbReference type="GO" id="GO:0005829">
    <property type="term" value="C:cytosol"/>
    <property type="evidence" value="ECO:0007669"/>
    <property type="project" value="TreeGrafter"/>
</dbReference>
<dbReference type="GO" id="GO:0005524">
    <property type="term" value="F:ATP binding"/>
    <property type="evidence" value="ECO:0007669"/>
    <property type="project" value="UniProtKB-UniRule"/>
</dbReference>
<dbReference type="GO" id="GO:0004141">
    <property type="term" value="F:dethiobiotin synthase activity"/>
    <property type="evidence" value="ECO:0007669"/>
    <property type="project" value="UniProtKB-UniRule"/>
</dbReference>
<dbReference type="GO" id="GO:0000287">
    <property type="term" value="F:magnesium ion binding"/>
    <property type="evidence" value="ECO:0007669"/>
    <property type="project" value="UniProtKB-UniRule"/>
</dbReference>
<dbReference type="GO" id="GO:0009102">
    <property type="term" value="P:biotin biosynthetic process"/>
    <property type="evidence" value="ECO:0007669"/>
    <property type="project" value="UniProtKB-UniRule"/>
</dbReference>
<dbReference type="CDD" id="cd03109">
    <property type="entry name" value="DTBS"/>
    <property type="match status" value="1"/>
</dbReference>
<dbReference type="Gene3D" id="3.40.50.300">
    <property type="entry name" value="P-loop containing nucleotide triphosphate hydrolases"/>
    <property type="match status" value="1"/>
</dbReference>
<dbReference type="HAMAP" id="MF_00336">
    <property type="entry name" value="BioD"/>
    <property type="match status" value="1"/>
</dbReference>
<dbReference type="InterPro" id="IPR004472">
    <property type="entry name" value="DTB_synth_BioD"/>
</dbReference>
<dbReference type="InterPro" id="IPR027417">
    <property type="entry name" value="P-loop_NTPase"/>
</dbReference>
<dbReference type="NCBIfam" id="TIGR00347">
    <property type="entry name" value="bioD"/>
    <property type="match status" value="1"/>
</dbReference>
<dbReference type="PANTHER" id="PTHR43210:SF2">
    <property type="entry name" value="ATP-DEPENDENT DETHIOBIOTIN SYNTHETASE BIOD 2"/>
    <property type="match status" value="1"/>
</dbReference>
<dbReference type="PANTHER" id="PTHR43210">
    <property type="entry name" value="DETHIOBIOTIN SYNTHETASE"/>
    <property type="match status" value="1"/>
</dbReference>
<dbReference type="Pfam" id="PF13500">
    <property type="entry name" value="AAA_26"/>
    <property type="match status" value="1"/>
</dbReference>
<dbReference type="PIRSF" id="PIRSF006755">
    <property type="entry name" value="DTB_synth"/>
    <property type="match status" value="1"/>
</dbReference>
<dbReference type="SUPFAM" id="SSF52540">
    <property type="entry name" value="P-loop containing nucleoside triphosphate hydrolases"/>
    <property type="match status" value="1"/>
</dbReference>
<protein>
    <recommendedName>
        <fullName evidence="1">ATP-dependent dethiobiotin synthetase BioD</fullName>
        <ecNumber evidence="1">6.3.3.3</ecNumber>
    </recommendedName>
    <alternativeName>
        <fullName evidence="1">DTB synthetase</fullName>
        <shortName evidence="1">DTBS</shortName>
    </alternativeName>
    <alternativeName>
        <fullName evidence="1">Dethiobiotin synthase</fullName>
    </alternativeName>
</protein>
<proteinExistence type="inferred from homology"/>
<feature type="chain" id="PRO_0000302545" description="ATP-dependent dethiobiotin synthetase BioD">
    <location>
        <begin position="1"/>
        <end position="209"/>
    </location>
</feature>
<feature type="active site" evidence="1">
    <location>
        <position position="33"/>
    </location>
</feature>
<feature type="binding site" evidence="1">
    <location>
        <begin position="13"/>
        <end position="18"/>
    </location>
    <ligand>
        <name>ATP</name>
        <dbReference type="ChEBI" id="CHEBI:30616"/>
    </ligand>
</feature>
<feature type="binding site" evidence="1">
    <location>
        <position position="17"/>
    </location>
    <ligand>
        <name>Mg(2+)</name>
        <dbReference type="ChEBI" id="CHEBI:18420"/>
    </ligand>
</feature>
<feature type="binding site" evidence="1">
    <location>
        <position position="47"/>
    </location>
    <ligand>
        <name>Mg(2+)</name>
        <dbReference type="ChEBI" id="CHEBI:18420"/>
    </ligand>
</feature>
<feature type="binding site" evidence="1">
    <location>
        <begin position="100"/>
        <end position="103"/>
    </location>
    <ligand>
        <name>ATP</name>
        <dbReference type="ChEBI" id="CHEBI:30616"/>
    </ligand>
</feature>
<feature type="binding site" evidence="1">
    <location>
        <position position="100"/>
    </location>
    <ligand>
        <name>Mg(2+)</name>
        <dbReference type="ChEBI" id="CHEBI:18420"/>
    </ligand>
</feature>
<feature type="binding site" evidence="1">
    <location>
        <begin position="184"/>
        <end position="186"/>
    </location>
    <ligand>
        <name>ATP</name>
        <dbReference type="ChEBI" id="CHEBI:30616"/>
    </ligand>
</feature>
<name>BIOD_RHOPB</name>
<sequence length="209" mass="22520">MTPRIVVTGTDTDIGKTVFSAGLAGFLQASYWKPVQAGLDGGTDSSRVAALSGLPPQRILPERFRLNTPASPHLAAQIDGVRIELDALDVPQIAGSLVIEGAGGLMVPLNSDTLYIDVFARWNLPVVLCARTALGTINHALLSVEALRRRGIPICGIAFIGDDHRDSEDIICAIGQVRRLGRLPRLDPLDRHTLQAAFKTSFNREDFTS</sequence>
<reference key="1">
    <citation type="submission" date="2006-03" db="EMBL/GenBank/DDBJ databases">
        <title>Complete sequence of Rhodopseudomonas palustris BisB18.</title>
        <authorList>
            <consortium name="US DOE Joint Genome Institute"/>
            <person name="Copeland A."/>
            <person name="Lucas S."/>
            <person name="Lapidus A."/>
            <person name="Barry K."/>
            <person name="Detter J.C."/>
            <person name="Glavina del Rio T."/>
            <person name="Hammon N."/>
            <person name="Israni S."/>
            <person name="Dalin E."/>
            <person name="Tice H."/>
            <person name="Pitluck S."/>
            <person name="Chain P."/>
            <person name="Malfatti S."/>
            <person name="Shin M."/>
            <person name="Vergez L."/>
            <person name="Schmutz J."/>
            <person name="Larimer F."/>
            <person name="Land M."/>
            <person name="Hauser L."/>
            <person name="Pelletier D.A."/>
            <person name="Kyrpides N."/>
            <person name="Anderson I."/>
            <person name="Oda Y."/>
            <person name="Harwood C.S."/>
            <person name="Richardson P."/>
        </authorList>
    </citation>
    <scope>NUCLEOTIDE SEQUENCE [LARGE SCALE GENOMIC DNA]</scope>
    <source>
        <strain>BisB18</strain>
    </source>
</reference>